<name>Y1993_MYCTO</name>
<reference key="1">
    <citation type="journal article" date="2002" name="J. Bacteriol.">
        <title>Whole-genome comparison of Mycobacterium tuberculosis clinical and laboratory strains.</title>
        <authorList>
            <person name="Fleischmann R.D."/>
            <person name="Alland D."/>
            <person name="Eisen J.A."/>
            <person name="Carpenter L."/>
            <person name="White O."/>
            <person name="Peterson J.D."/>
            <person name="DeBoy R.T."/>
            <person name="Dodson R.J."/>
            <person name="Gwinn M.L."/>
            <person name="Haft D.H."/>
            <person name="Hickey E.K."/>
            <person name="Kolonay J.F."/>
            <person name="Nelson W.C."/>
            <person name="Umayam L.A."/>
            <person name="Ermolaeva M.D."/>
            <person name="Salzberg S.L."/>
            <person name="Delcher A."/>
            <person name="Utterback T.R."/>
            <person name="Weidman J.F."/>
            <person name="Khouri H.M."/>
            <person name="Gill J."/>
            <person name="Mikula A."/>
            <person name="Bishai W."/>
            <person name="Jacobs W.R. Jr."/>
            <person name="Venter J.C."/>
            <person name="Fraser C.M."/>
        </authorList>
    </citation>
    <scope>NUCLEOTIDE SEQUENCE [LARGE SCALE GENOMIC DNA]</scope>
    <source>
        <strain>CDC 1551 / Oshkosh</strain>
    </source>
</reference>
<accession>P9WLP4</accession>
<accession>L0TB14</accession>
<accession>P64913</accession>
<accession>Q10865</accession>
<sequence>MVTHELLVKAAGAVLTGLVGVSAYETLRKALGTAPIRRASVTVMEWGLRGTRRAEAAAESARLTVADVVAEARGRIGEEAPLPAGARVDE</sequence>
<keyword id="KW-1185">Reference proteome</keyword>
<organism>
    <name type="scientific">Mycobacterium tuberculosis (strain CDC 1551 / Oshkosh)</name>
    <dbReference type="NCBI Taxonomy" id="83331"/>
    <lineage>
        <taxon>Bacteria</taxon>
        <taxon>Bacillati</taxon>
        <taxon>Actinomycetota</taxon>
        <taxon>Actinomycetes</taxon>
        <taxon>Mycobacteriales</taxon>
        <taxon>Mycobacteriaceae</taxon>
        <taxon>Mycobacterium</taxon>
        <taxon>Mycobacterium tuberculosis complex</taxon>
    </lineage>
</organism>
<protein>
    <recommendedName>
        <fullName>Uncharacterized protein MT2049</fullName>
    </recommendedName>
</protein>
<gene>
    <name type="ordered locus">MT2049</name>
</gene>
<feature type="chain" id="PRO_0000427443" description="Uncharacterized protein MT2049">
    <location>
        <begin position="1"/>
        <end position="90"/>
    </location>
</feature>
<dbReference type="EMBL" id="AE000516">
    <property type="protein sequence ID" value="AAK46326.1"/>
    <property type="molecule type" value="Genomic_DNA"/>
</dbReference>
<dbReference type="PIR" id="G70757">
    <property type="entry name" value="G70757"/>
</dbReference>
<dbReference type="RefSeq" id="WP_003410017.1">
    <property type="nucleotide sequence ID" value="NZ_KK341227.1"/>
</dbReference>
<dbReference type="SMR" id="P9WLP4"/>
<dbReference type="KEGG" id="mtc:MT2049"/>
<dbReference type="PATRIC" id="fig|83331.31.peg.2206"/>
<dbReference type="HOGENOM" id="CLU_149299_1_0_11"/>
<dbReference type="Proteomes" id="UP000001020">
    <property type="component" value="Chromosome"/>
</dbReference>
<dbReference type="InterPro" id="IPR009963">
    <property type="entry name" value="DUF1490"/>
</dbReference>
<dbReference type="Pfam" id="PF07371">
    <property type="entry name" value="DUF1490"/>
    <property type="match status" value="1"/>
</dbReference>
<proteinExistence type="predicted"/>